<sequence length="233" mass="26588">MTVTRNGCRIFPKLHYEVHGLVADKCYSMVFHIAAQFKEPKFICHPAGIKMGALWTSRTISFEDFFITTNPQPTDNSMIHLPPHCKFTPILDVYEVVLDHMQQPATMHRVSSCRLPYTFMTVTMYKNREARVLKLGMNPHARHFLKNNTNKNHLDTASLIPPIPSVQPLPLFPLPQNSMSYTFSYDTYPSNIHVAPIQLPFPFPAVLSTLASSLQLCRDGDPEEIDEEIDIMN</sequence>
<organism>
    <name type="scientific">Caenorhabditis elegans</name>
    <dbReference type="NCBI Taxonomy" id="6239"/>
    <lineage>
        <taxon>Eukaryota</taxon>
        <taxon>Metazoa</taxon>
        <taxon>Ecdysozoa</taxon>
        <taxon>Nematoda</taxon>
        <taxon>Chromadorea</taxon>
        <taxon>Rhabditida</taxon>
        <taxon>Rhabditina</taxon>
        <taxon>Rhabditomorpha</taxon>
        <taxon>Rhabditoidea</taxon>
        <taxon>Rhabditidae</taxon>
        <taxon>Peloderinae</taxon>
        <taxon>Caenorhabditis</taxon>
    </lineage>
</organism>
<feature type="chain" id="PRO_0000248070" description="Putative T-box protein 41">
    <location>
        <begin position="1"/>
        <end position="233"/>
    </location>
</feature>
<feature type="DNA-binding region" description="T-box" evidence="1">
    <location>
        <begin position="1"/>
        <end position="146"/>
    </location>
</feature>
<proteinExistence type="inferred from homology"/>
<reference key="1">
    <citation type="journal article" date="1998" name="Science">
        <title>Genome sequence of the nematode C. elegans: a platform for investigating biology.</title>
        <authorList>
            <consortium name="The C. elegans sequencing consortium"/>
        </authorList>
    </citation>
    <scope>NUCLEOTIDE SEQUENCE [LARGE SCALE GENOMIC DNA]</scope>
    <source>
        <strain>Bristol N2</strain>
    </source>
</reference>
<keyword id="KW-0238">DNA-binding</keyword>
<keyword id="KW-0539">Nucleus</keyword>
<keyword id="KW-1185">Reference proteome</keyword>
<keyword id="KW-0804">Transcription</keyword>
<keyword id="KW-0805">Transcription regulation</keyword>
<dbReference type="EMBL" id="FO080541">
    <property type="protein sequence ID" value="CCD64525.1"/>
    <property type="molecule type" value="Genomic_DNA"/>
</dbReference>
<dbReference type="PIR" id="T28914">
    <property type="entry name" value="T28914"/>
</dbReference>
<dbReference type="RefSeq" id="NP_508343.2">
    <property type="nucleotide sequence ID" value="NM_075942.4"/>
</dbReference>
<dbReference type="SMR" id="Q22813"/>
<dbReference type="PaxDb" id="6239-T26C11.1"/>
<dbReference type="EnsemblMetazoa" id="T26C11.1a.1">
    <property type="protein sequence ID" value="T26C11.1a.1"/>
    <property type="gene ID" value="WBGene00006560"/>
</dbReference>
<dbReference type="GeneID" id="188917"/>
<dbReference type="KEGG" id="cel:CELE_T26C11.1"/>
<dbReference type="UCSC" id="T26C11.1">
    <property type="organism name" value="c. elegans"/>
</dbReference>
<dbReference type="AGR" id="WB:WBGene00006560"/>
<dbReference type="CTD" id="188917"/>
<dbReference type="WormBase" id="T26C11.1a">
    <property type="protein sequence ID" value="CE51597"/>
    <property type="gene ID" value="WBGene00006560"/>
    <property type="gene designation" value="tbx-41"/>
</dbReference>
<dbReference type="eggNOG" id="KOG3585">
    <property type="taxonomic scope" value="Eukaryota"/>
</dbReference>
<dbReference type="HOGENOM" id="CLU_1190789_0_0_1"/>
<dbReference type="InParanoid" id="Q22813"/>
<dbReference type="PhylomeDB" id="Q22813"/>
<dbReference type="PRO" id="PR:Q22813"/>
<dbReference type="Proteomes" id="UP000001940">
    <property type="component" value="Chromosome X"/>
</dbReference>
<dbReference type="Bgee" id="WBGene00006560">
    <property type="expression patterns" value="Expressed in embryo"/>
</dbReference>
<dbReference type="GO" id="GO:0000785">
    <property type="term" value="C:chromatin"/>
    <property type="evidence" value="ECO:0000318"/>
    <property type="project" value="GO_Central"/>
</dbReference>
<dbReference type="GO" id="GO:0005634">
    <property type="term" value="C:nucleus"/>
    <property type="evidence" value="ECO:0000318"/>
    <property type="project" value="GO_Central"/>
</dbReference>
<dbReference type="GO" id="GO:0000981">
    <property type="term" value="F:DNA-binding transcription factor activity, RNA polymerase II-specific"/>
    <property type="evidence" value="ECO:0000318"/>
    <property type="project" value="GO_Central"/>
</dbReference>
<dbReference type="GO" id="GO:0000978">
    <property type="term" value="F:RNA polymerase II cis-regulatory region sequence-specific DNA binding"/>
    <property type="evidence" value="ECO:0000318"/>
    <property type="project" value="GO_Central"/>
</dbReference>
<dbReference type="GO" id="GO:0001708">
    <property type="term" value="P:cell fate specification"/>
    <property type="evidence" value="ECO:0000318"/>
    <property type="project" value="GO_Central"/>
</dbReference>
<dbReference type="GO" id="GO:0045893">
    <property type="term" value="P:positive regulation of DNA-templated transcription"/>
    <property type="evidence" value="ECO:0007669"/>
    <property type="project" value="InterPro"/>
</dbReference>
<dbReference type="GO" id="GO:0006357">
    <property type="term" value="P:regulation of transcription by RNA polymerase II"/>
    <property type="evidence" value="ECO:0000318"/>
    <property type="project" value="GO_Central"/>
</dbReference>
<dbReference type="Gene3D" id="2.60.40.820">
    <property type="entry name" value="Transcription factor, T-box"/>
    <property type="match status" value="1"/>
</dbReference>
<dbReference type="InterPro" id="IPR008967">
    <property type="entry name" value="p53-like_TF_DNA-bd_sf"/>
</dbReference>
<dbReference type="InterPro" id="IPR046360">
    <property type="entry name" value="T-box_DNA-bd"/>
</dbReference>
<dbReference type="InterPro" id="IPR036960">
    <property type="entry name" value="T-box_sf"/>
</dbReference>
<dbReference type="Pfam" id="PF00907">
    <property type="entry name" value="T-box"/>
    <property type="match status" value="1"/>
</dbReference>
<dbReference type="SMART" id="SM00425">
    <property type="entry name" value="TBOX"/>
    <property type="match status" value="1"/>
</dbReference>
<dbReference type="SUPFAM" id="SSF49417">
    <property type="entry name" value="p53-like transcription factors"/>
    <property type="match status" value="1"/>
</dbReference>
<dbReference type="PROSITE" id="PS50252">
    <property type="entry name" value="TBOX_3"/>
    <property type="match status" value="1"/>
</dbReference>
<comment type="subcellular location">
    <subcellularLocation>
        <location evidence="1">Nucleus</location>
    </subcellularLocation>
</comment>
<gene>
    <name type="primary">tbx-41</name>
    <name type="ORF">T26C11.1</name>
</gene>
<accession>Q22813</accession>
<name>TBX41_CAEEL</name>
<protein>
    <recommendedName>
        <fullName>Putative T-box protein 41</fullName>
    </recommendedName>
</protein>
<evidence type="ECO:0000255" key="1">
    <source>
        <dbReference type="PROSITE-ProRule" id="PRU00201"/>
    </source>
</evidence>